<keyword id="KW-0732">Signal</keyword>
<keyword id="KW-0758">Storage protein</keyword>
<keyword id="KW-0926">Vacuole</keyword>
<organism>
    <name type="scientific">Ipomoea batatas</name>
    <name type="common">Sweet potato</name>
    <name type="synonym">Convolvulus batatas</name>
    <dbReference type="NCBI Taxonomy" id="4120"/>
    <lineage>
        <taxon>Eukaryota</taxon>
        <taxon>Viridiplantae</taxon>
        <taxon>Streptophyta</taxon>
        <taxon>Embryophyta</taxon>
        <taxon>Tracheophyta</taxon>
        <taxon>Spermatophyta</taxon>
        <taxon>Magnoliopsida</taxon>
        <taxon>eudicotyledons</taxon>
        <taxon>Gunneridae</taxon>
        <taxon>Pentapetalae</taxon>
        <taxon>asterids</taxon>
        <taxon>lamiids</taxon>
        <taxon>Solanales</taxon>
        <taxon>Convolvulaceae</taxon>
        <taxon>Ipomoeeae</taxon>
        <taxon>Ipomoea</taxon>
    </lineage>
</organism>
<comment type="function">
    <text>Major tuberous root protein.</text>
</comment>
<comment type="subcellular location">
    <subcellularLocation>
        <location>Vacuole</location>
    </subcellularLocation>
</comment>
<comment type="tissue specificity">
    <text>Accumulates specifically in tuberous roots and tubers upon tuberization. Sporamin accounts 60 to 80% of the total soluble protein of the organ.</text>
</comment>
<comment type="similarity">
    <text evidence="2">Belongs to the protease inhibitor I3 (leguminous Kunitz-type inhibitor) family.</text>
</comment>
<accession>P10917</accession>
<reference key="1">
    <citation type="journal article" date="1988" name="Plant Mol. Biol.">
        <title>Genes encoding for the major tuberous root protein of sweet potato: identification of putative regulatory sequence in the 5' upstream region.</title>
        <authorList>
            <person name="Hattori T."/>
            <person name="Nakamura K."/>
        </authorList>
        <dbReference type="AGRICOLA" id="IND92000020"/>
    </citation>
    <scope>NUCLEOTIDE SEQUENCE [GENOMIC DNA]</scope>
    <source>
        <strain>cv. Kokei No. 14</strain>
        <tissue>Tuberous root</tissue>
    </source>
</reference>
<evidence type="ECO:0000255" key="1"/>
<evidence type="ECO:0000305" key="2"/>
<dbReference type="EMBL" id="X13509">
    <property type="protein sequence ID" value="CAA31862.1"/>
    <property type="molecule type" value="Genomic_DNA"/>
</dbReference>
<dbReference type="PIR" id="S04208">
    <property type="entry name" value="S04208"/>
</dbReference>
<dbReference type="SMR" id="P10917"/>
<dbReference type="MEROPS" id="I03.013"/>
<dbReference type="GO" id="GO:0005773">
    <property type="term" value="C:vacuole"/>
    <property type="evidence" value="ECO:0007669"/>
    <property type="project" value="UniProtKB-SubCell"/>
</dbReference>
<dbReference type="GO" id="GO:0004866">
    <property type="term" value="F:endopeptidase inhibitor activity"/>
    <property type="evidence" value="ECO:0007669"/>
    <property type="project" value="InterPro"/>
</dbReference>
<dbReference type="GO" id="GO:0045735">
    <property type="term" value="F:nutrient reservoir activity"/>
    <property type="evidence" value="ECO:0007669"/>
    <property type="project" value="UniProtKB-KW"/>
</dbReference>
<dbReference type="CDD" id="cd23368">
    <property type="entry name" value="beta-trefoil_STI_SPOR"/>
    <property type="match status" value="1"/>
</dbReference>
<dbReference type="Gene3D" id="2.80.10.50">
    <property type="match status" value="1"/>
</dbReference>
<dbReference type="InterPro" id="IPR011065">
    <property type="entry name" value="Kunitz_inhibitor_STI-like_sf"/>
</dbReference>
<dbReference type="InterPro" id="IPR002160">
    <property type="entry name" value="Prot_inh_Kunz-lg"/>
</dbReference>
<dbReference type="PANTHER" id="PTHR33107:SF28">
    <property type="entry name" value="CYSTEINE PROTEASE INHIBITOR 8-LIKE"/>
    <property type="match status" value="1"/>
</dbReference>
<dbReference type="PANTHER" id="PTHR33107">
    <property type="entry name" value="KUNITZ TRYPSIN INHIBITOR 2"/>
    <property type="match status" value="1"/>
</dbReference>
<dbReference type="Pfam" id="PF00197">
    <property type="entry name" value="Kunitz_legume"/>
    <property type="match status" value="1"/>
</dbReference>
<dbReference type="PRINTS" id="PR00291">
    <property type="entry name" value="KUNITZINHBTR"/>
</dbReference>
<dbReference type="SMART" id="SM00452">
    <property type="entry name" value="STI"/>
    <property type="match status" value="1"/>
</dbReference>
<dbReference type="SUPFAM" id="SSF50386">
    <property type="entry name" value="STI-like"/>
    <property type="match status" value="1"/>
</dbReference>
<dbReference type="PROSITE" id="PS00283">
    <property type="entry name" value="SOYBEAN_KUNITZ"/>
    <property type="match status" value="1"/>
</dbReference>
<feature type="signal peptide" evidence="1">
    <location>
        <begin position="1"/>
        <end position="23"/>
    </location>
</feature>
<feature type="chain" id="PRO_0000016937" description="Sporamin A">
    <location>
        <begin position="24"/>
        <end position="219"/>
    </location>
</feature>
<sequence length="219" mass="24172">MKALTLALFLALSLYLLPNPAHSRFNPIRLPTTHEPASSETPVLDINGDEVRAGGNYYMVYAILGACGGGLRLAHLDLMNNCASDVIVSPNDLDNGDLITITPATVDPEATVVMTSTYQTFRFNIATNKLCVNNVNWGIQYDSASGQSLLKAGEFVSDNSNQFKIEVVDANLNFYKLTYCLFGSDKCYNVGRFKDPMLRTTRLALSYYPFFFVIKPTVV</sequence>
<gene>
    <name type="primary">GSPO-A1</name>
</gene>
<proteinExistence type="evidence at transcript level"/>
<protein>
    <recommendedName>
        <fullName>Sporamin A</fullName>
    </recommendedName>
</protein>
<name>SPORA_IPOBA</name>